<keyword id="KW-0997">Cell inner membrane</keyword>
<keyword id="KW-1003">Cell membrane</keyword>
<keyword id="KW-0472">Membrane</keyword>
<keyword id="KW-0614">Plasmid</keyword>
<keyword id="KW-1185">Reference proteome</keyword>
<keyword id="KW-0762">Sugar transport</keyword>
<keyword id="KW-0812">Transmembrane</keyword>
<keyword id="KW-1133">Transmembrane helix</keyword>
<keyword id="KW-0813">Transport</keyword>
<proteinExistence type="inferred from homology"/>
<name>Y4MJ_SINFN</name>
<protein>
    <recommendedName>
        <fullName>Probable ABC transporter permease protein y4mJ</fullName>
    </recommendedName>
</protein>
<organism>
    <name type="scientific">Sinorhizobium fredii (strain NBRC 101917 / NGR234)</name>
    <dbReference type="NCBI Taxonomy" id="394"/>
    <lineage>
        <taxon>Bacteria</taxon>
        <taxon>Pseudomonadati</taxon>
        <taxon>Pseudomonadota</taxon>
        <taxon>Alphaproteobacteria</taxon>
        <taxon>Hyphomicrobiales</taxon>
        <taxon>Rhizobiaceae</taxon>
        <taxon>Sinorhizobium/Ensifer group</taxon>
        <taxon>Sinorhizobium</taxon>
    </lineage>
</organism>
<comment type="function">
    <text>Probably part of the binding-protein-dependent transport system y4mIJK. This system probably transports a sugar. Probably responsible for the translocation of the substrate across the membrane.</text>
</comment>
<comment type="subcellular location">
    <subcellularLocation>
        <location>Cell inner membrane</location>
        <topology>Multi-pass membrane protein</topology>
    </subcellularLocation>
</comment>
<comment type="similarity">
    <text evidence="2">Belongs to the binding-protein-dependent transport system permease family. AraH/RbsC subfamily.</text>
</comment>
<evidence type="ECO:0000255" key="1"/>
<evidence type="ECO:0000305" key="2"/>
<gene>
    <name type="ordered locus">NGR_a02490</name>
    <name type="ORF">y4mJ</name>
</gene>
<geneLocation type="plasmid">
    <name>sym pNGR234a</name>
</geneLocation>
<accession>P55569</accession>
<reference key="1">
    <citation type="journal article" date="1997" name="Nature">
        <title>Molecular basis of symbiosis between Rhizobium and legumes.</title>
        <authorList>
            <person name="Freiberg C.A."/>
            <person name="Fellay R."/>
            <person name="Bairoch A."/>
            <person name="Broughton W.J."/>
            <person name="Rosenthal A."/>
            <person name="Perret X."/>
        </authorList>
    </citation>
    <scope>NUCLEOTIDE SEQUENCE [LARGE SCALE GENOMIC DNA]</scope>
    <source>
        <strain>NBRC 101917 / NGR234</strain>
    </source>
</reference>
<reference key="2">
    <citation type="journal article" date="2009" name="Appl. Environ. Microbiol.">
        <title>Rhizobium sp. strain NGR234 possesses a remarkable number of secretion systems.</title>
        <authorList>
            <person name="Schmeisser C."/>
            <person name="Liesegang H."/>
            <person name="Krysciak D."/>
            <person name="Bakkou N."/>
            <person name="Le Quere A."/>
            <person name="Wollherr A."/>
            <person name="Heinemeyer I."/>
            <person name="Morgenstern B."/>
            <person name="Pommerening-Roeser A."/>
            <person name="Flores M."/>
            <person name="Palacios R."/>
            <person name="Brenner S."/>
            <person name="Gottschalk G."/>
            <person name="Schmitz R.A."/>
            <person name="Broughton W.J."/>
            <person name="Perret X."/>
            <person name="Strittmatter A.W."/>
            <person name="Streit W.R."/>
        </authorList>
    </citation>
    <scope>NUCLEOTIDE SEQUENCE [LARGE SCALE GENOMIC DNA]</scope>
    <source>
        <strain>NBRC 101917 / NGR234</strain>
    </source>
</reference>
<feature type="chain" id="PRO_0000060294" description="Probable ABC transporter permease protein y4mJ">
    <location>
        <begin position="1"/>
        <end position="333"/>
    </location>
</feature>
<feature type="transmembrane region" description="Helical" evidence="1">
    <location>
        <begin position="30"/>
        <end position="50"/>
    </location>
</feature>
<feature type="transmembrane region" description="Helical" evidence="1">
    <location>
        <begin position="62"/>
        <end position="82"/>
    </location>
</feature>
<feature type="transmembrane region" description="Helical" evidence="1">
    <location>
        <begin position="84"/>
        <end position="104"/>
    </location>
</feature>
<feature type="transmembrane region" description="Helical" evidence="1">
    <location>
        <begin position="110"/>
        <end position="130"/>
    </location>
</feature>
<feature type="transmembrane region" description="Helical" evidence="1">
    <location>
        <begin position="133"/>
        <end position="153"/>
    </location>
</feature>
<feature type="transmembrane region" description="Helical" evidence="1">
    <location>
        <begin position="175"/>
        <end position="195"/>
    </location>
</feature>
<feature type="transmembrane region" description="Helical" evidence="1">
    <location>
        <begin position="228"/>
        <end position="248"/>
    </location>
</feature>
<feature type="transmembrane region" description="Helical" evidence="1">
    <location>
        <begin position="253"/>
        <end position="273"/>
    </location>
</feature>
<feature type="transmembrane region" description="Helical" evidence="1">
    <location>
        <begin position="274"/>
        <end position="294"/>
    </location>
</feature>
<feature type="transmembrane region" description="Helical" evidence="1">
    <location>
        <begin position="300"/>
        <end position="320"/>
    </location>
</feature>
<dbReference type="EMBL" id="U00090">
    <property type="protein sequence ID" value="AAB91773.1"/>
    <property type="molecule type" value="Genomic_DNA"/>
</dbReference>
<dbReference type="RefSeq" id="NP_443976.1">
    <property type="nucleotide sequence ID" value="NC_000914.2"/>
</dbReference>
<dbReference type="RefSeq" id="WP_010875274.1">
    <property type="nucleotide sequence ID" value="NC_000914.2"/>
</dbReference>
<dbReference type="SMR" id="P55569"/>
<dbReference type="KEGG" id="rhi:NGR_a02490"/>
<dbReference type="PATRIC" id="fig|394.7.peg.259"/>
<dbReference type="eggNOG" id="COG1172">
    <property type="taxonomic scope" value="Bacteria"/>
</dbReference>
<dbReference type="HOGENOM" id="CLU_028880_0_1_5"/>
<dbReference type="OrthoDB" id="9775406at2"/>
<dbReference type="Proteomes" id="UP000001054">
    <property type="component" value="Plasmid pNGR234a"/>
</dbReference>
<dbReference type="GO" id="GO:0005886">
    <property type="term" value="C:plasma membrane"/>
    <property type="evidence" value="ECO:0007669"/>
    <property type="project" value="UniProtKB-SubCell"/>
</dbReference>
<dbReference type="GO" id="GO:0022857">
    <property type="term" value="F:transmembrane transporter activity"/>
    <property type="evidence" value="ECO:0007669"/>
    <property type="project" value="InterPro"/>
</dbReference>
<dbReference type="CDD" id="cd06579">
    <property type="entry name" value="TM_PBP1_transp_AraH_like"/>
    <property type="match status" value="1"/>
</dbReference>
<dbReference type="InterPro" id="IPR001851">
    <property type="entry name" value="ABC_transp_permease"/>
</dbReference>
<dbReference type="PANTHER" id="PTHR32196">
    <property type="entry name" value="ABC TRANSPORTER PERMEASE PROTEIN YPHD-RELATED-RELATED"/>
    <property type="match status" value="1"/>
</dbReference>
<dbReference type="PANTHER" id="PTHR32196:SF72">
    <property type="entry name" value="RIBOSE IMPORT PERMEASE PROTEIN RBSC"/>
    <property type="match status" value="1"/>
</dbReference>
<dbReference type="Pfam" id="PF02653">
    <property type="entry name" value="BPD_transp_2"/>
    <property type="match status" value="1"/>
</dbReference>
<sequence>MTKTIIDQAGATPGAIRTREGLVSAYRTELAIAGAIVLLVLAVGTQVPQAMSWGNFANITQAGAPLIIMSLGVLLVVITGGIDLSVGSVFSLTGMVTAQAMASGLDVSAALIGLGVGLVFGSINGFLVTVAGLAPFVVTLITFAVAGSLAFIVTNGRSMPIGDPDFWLLNSGSLIPGVPNYILFCIVLLVVIEIFLKKMVAGRWFYAVGSSAAAARLLGIPVKRTQFFAYVASSLLASFSGLLTISYILNAESTAGSSLMLQAIAAVVIGGASLLGGTGTAVGAVLGALMITVIQNGVNLIGINSFWQGSVTGLAILIAVLIDRFSKSRRGAV</sequence>